<sequence length="468" mass="53734">MTTALYLPEENIDMIAATSVLQQQAADIRTRTINWASYMQSQMISEEDYKAISALDKSRASFLAQNSSQVVKTLLNLVSHLSKDSTIQYILVLLDDLLQEDRSRVDLFHDTAGKLKQCIWGPFLNLLNRQDGFIVNMSSRILAKFACWGHETMPKSDLNFYLQFLKDQLASNNNEYIQSVARCLQMMLRVDEYRFAFVGVDGISTLIRILSTRVNFQVQYQLIFCLWVLTFNPLLAAKMNKFSVIPILADILSDCAKEKVTRIILAVFRNLIEKPEDSSVAKDHCIAMVQCKVLKQLSILEQRRFDDEDITADVEYLSEKLQNSVQDLSSFDEYATEVRSGRLEWSPVHKSAKFWRENAQRLNEKNYELLRILVHLLETSKDAIILSVACFDIGEYVRHYPRGKHVLEQLGGKQIVMQHLGHEDPNVRYEALLAVQKLMVHNWEYLGKQLEKENENQKQGAAPIAGKA</sequence>
<keyword id="KW-0025">Alternative splicing</keyword>
<keyword id="KW-0375">Hydrogen ion transport</keyword>
<keyword id="KW-0406">Ion transport</keyword>
<keyword id="KW-1185">Reference proteome</keyword>
<keyword id="KW-0813">Transport</keyword>
<reference key="1">
    <citation type="submission" date="1999-06" db="EMBL/GenBank/DDBJ databases">
        <title>Characterization of vhaSFD, the gene encoding a SFD subunit of the Drosophila V-ATPase.</title>
        <authorList>
            <person name="Westhoff M.A."/>
            <person name="Dow J.A.T."/>
        </authorList>
    </citation>
    <scope>NUCLEOTIDE SEQUENCE [MRNA] (ISOFORM D)</scope>
</reference>
<reference key="2">
    <citation type="journal article" date="2000" name="Science">
        <title>The genome sequence of Drosophila melanogaster.</title>
        <authorList>
            <person name="Adams M.D."/>
            <person name="Celniker S.E."/>
            <person name="Holt R.A."/>
            <person name="Evans C.A."/>
            <person name="Gocayne J.D."/>
            <person name="Amanatides P.G."/>
            <person name="Scherer S.E."/>
            <person name="Li P.W."/>
            <person name="Hoskins R.A."/>
            <person name="Galle R.F."/>
            <person name="George R.A."/>
            <person name="Lewis S.E."/>
            <person name="Richards S."/>
            <person name="Ashburner M."/>
            <person name="Henderson S.N."/>
            <person name="Sutton G.G."/>
            <person name="Wortman J.R."/>
            <person name="Yandell M.D."/>
            <person name="Zhang Q."/>
            <person name="Chen L.X."/>
            <person name="Brandon R.C."/>
            <person name="Rogers Y.-H.C."/>
            <person name="Blazej R.G."/>
            <person name="Champe M."/>
            <person name="Pfeiffer B.D."/>
            <person name="Wan K.H."/>
            <person name="Doyle C."/>
            <person name="Baxter E.G."/>
            <person name="Helt G."/>
            <person name="Nelson C.R."/>
            <person name="Miklos G.L.G."/>
            <person name="Abril J.F."/>
            <person name="Agbayani A."/>
            <person name="An H.-J."/>
            <person name="Andrews-Pfannkoch C."/>
            <person name="Baldwin D."/>
            <person name="Ballew R.M."/>
            <person name="Basu A."/>
            <person name="Baxendale J."/>
            <person name="Bayraktaroglu L."/>
            <person name="Beasley E.M."/>
            <person name="Beeson K.Y."/>
            <person name="Benos P.V."/>
            <person name="Berman B.P."/>
            <person name="Bhandari D."/>
            <person name="Bolshakov S."/>
            <person name="Borkova D."/>
            <person name="Botchan M.R."/>
            <person name="Bouck J."/>
            <person name="Brokstein P."/>
            <person name="Brottier P."/>
            <person name="Burtis K.C."/>
            <person name="Busam D.A."/>
            <person name="Butler H."/>
            <person name="Cadieu E."/>
            <person name="Center A."/>
            <person name="Chandra I."/>
            <person name="Cherry J.M."/>
            <person name="Cawley S."/>
            <person name="Dahlke C."/>
            <person name="Davenport L.B."/>
            <person name="Davies P."/>
            <person name="de Pablos B."/>
            <person name="Delcher A."/>
            <person name="Deng Z."/>
            <person name="Mays A.D."/>
            <person name="Dew I."/>
            <person name="Dietz S.M."/>
            <person name="Dodson K."/>
            <person name="Doup L.E."/>
            <person name="Downes M."/>
            <person name="Dugan-Rocha S."/>
            <person name="Dunkov B.C."/>
            <person name="Dunn P."/>
            <person name="Durbin K.J."/>
            <person name="Evangelista C.C."/>
            <person name="Ferraz C."/>
            <person name="Ferriera S."/>
            <person name="Fleischmann W."/>
            <person name="Fosler C."/>
            <person name="Gabrielian A.E."/>
            <person name="Garg N.S."/>
            <person name="Gelbart W.M."/>
            <person name="Glasser K."/>
            <person name="Glodek A."/>
            <person name="Gong F."/>
            <person name="Gorrell J.H."/>
            <person name="Gu Z."/>
            <person name="Guan P."/>
            <person name="Harris M."/>
            <person name="Harris N.L."/>
            <person name="Harvey D.A."/>
            <person name="Heiman T.J."/>
            <person name="Hernandez J.R."/>
            <person name="Houck J."/>
            <person name="Hostin D."/>
            <person name="Houston K.A."/>
            <person name="Howland T.J."/>
            <person name="Wei M.-H."/>
            <person name="Ibegwam C."/>
            <person name="Jalali M."/>
            <person name="Kalush F."/>
            <person name="Karpen G.H."/>
            <person name="Ke Z."/>
            <person name="Kennison J.A."/>
            <person name="Ketchum K.A."/>
            <person name="Kimmel B.E."/>
            <person name="Kodira C.D."/>
            <person name="Kraft C.L."/>
            <person name="Kravitz S."/>
            <person name="Kulp D."/>
            <person name="Lai Z."/>
            <person name="Lasko P."/>
            <person name="Lei Y."/>
            <person name="Levitsky A.A."/>
            <person name="Li J.H."/>
            <person name="Li Z."/>
            <person name="Liang Y."/>
            <person name="Lin X."/>
            <person name="Liu X."/>
            <person name="Mattei B."/>
            <person name="McIntosh T.C."/>
            <person name="McLeod M.P."/>
            <person name="McPherson D."/>
            <person name="Merkulov G."/>
            <person name="Milshina N.V."/>
            <person name="Mobarry C."/>
            <person name="Morris J."/>
            <person name="Moshrefi A."/>
            <person name="Mount S.M."/>
            <person name="Moy M."/>
            <person name="Murphy B."/>
            <person name="Murphy L."/>
            <person name="Muzny D.M."/>
            <person name="Nelson D.L."/>
            <person name="Nelson D.R."/>
            <person name="Nelson K.A."/>
            <person name="Nixon K."/>
            <person name="Nusskern D.R."/>
            <person name="Pacleb J.M."/>
            <person name="Palazzolo M."/>
            <person name="Pittman G.S."/>
            <person name="Pan S."/>
            <person name="Pollard J."/>
            <person name="Puri V."/>
            <person name="Reese M.G."/>
            <person name="Reinert K."/>
            <person name="Remington K."/>
            <person name="Saunders R.D.C."/>
            <person name="Scheeler F."/>
            <person name="Shen H."/>
            <person name="Shue B.C."/>
            <person name="Siden-Kiamos I."/>
            <person name="Simpson M."/>
            <person name="Skupski M.P."/>
            <person name="Smith T.J."/>
            <person name="Spier E."/>
            <person name="Spradling A.C."/>
            <person name="Stapleton M."/>
            <person name="Strong R."/>
            <person name="Sun E."/>
            <person name="Svirskas R."/>
            <person name="Tector C."/>
            <person name="Turner R."/>
            <person name="Venter E."/>
            <person name="Wang A.H."/>
            <person name="Wang X."/>
            <person name="Wang Z.-Y."/>
            <person name="Wassarman D.A."/>
            <person name="Weinstock G.M."/>
            <person name="Weissenbach J."/>
            <person name="Williams S.M."/>
            <person name="Woodage T."/>
            <person name="Worley K.C."/>
            <person name="Wu D."/>
            <person name="Yang S."/>
            <person name="Yao Q.A."/>
            <person name="Ye J."/>
            <person name="Yeh R.-F."/>
            <person name="Zaveri J.S."/>
            <person name="Zhan M."/>
            <person name="Zhang G."/>
            <person name="Zhao Q."/>
            <person name="Zheng L."/>
            <person name="Zheng X.H."/>
            <person name="Zhong F.N."/>
            <person name="Zhong W."/>
            <person name="Zhou X."/>
            <person name="Zhu S.C."/>
            <person name="Zhu X."/>
            <person name="Smith H.O."/>
            <person name="Gibbs R.A."/>
            <person name="Myers E.W."/>
            <person name="Rubin G.M."/>
            <person name="Venter J.C."/>
        </authorList>
    </citation>
    <scope>NUCLEOTIDE SEQUENCE [LARGE SCALE GENOMIC DNA]</scope>
    <source>
        <strain>Berkeley</strain>
    </source>
</reference>
<reference key="3">
    <citation type="journal article" date="2002" name="Genome Biol.">
        <title>Annotation of the Drosophila melanogaster euchromatic genome: a systematic review.</title>
        <authorList>
            <person name="Misra S."/>
            <person name="Crosby M.A."/>
            <person name="Mungall C.J."/>
            <person name="Matthews B.B."/>
            <person name="Campbell K.S."/>
            <person name="Hradecky P."/>
            <person name="Huang Y."/>
            <person name="Kaminker J.S."/>
            <person name="Millburn G.H."/>
            <person name="Prochnik S.E."/>
            <person name="Smith C.D."/>
            <person name="Tupy J.L."/>
            <person name="Whitfield E.J."/>
            <person name="Bayraktaroglu L."/>
            <person name="Berman B.P."/>
            <person name="Bettencourt B.R."/>
            <person name="Celniker S.E."/>
            <person name="de Grey A.D.N.J."/>
            <person name="Drysdale R.A."/>
            <person name="Harris N.L."/>
            <person name="Richter J."/>
            <person name="Russo S."/>
            <person name="Schroeder A.J."/>
            <person name="Shu S.Q."/>
            <person name="Stapleton M."/>
            <person name="Yamada C."/>
            <person name="Ashburner M."/>
            <person name="Gelbart W.M."/>
            <person name="Rubin G.M."/>
            <person name="Lewis S.E."/>
        </authorList>
    </citation>
    <scope>GENOME REANNOTATION</scope>
    <source>
        <strain>Berkeley</strain>
    </source>
</reference>
<reference key="4">
    <citation type="journal article" date="2002" name="Genome Biol.">
        <title>A Drosophila full-length cDNA resource.</title>
        <authorList>
            <person name="Stapleton M."/>
            <person name="Carlson J.W."/>
            <person name="Brokstein P."/>
            <person name="Yu C."/>
            <person name="Champe M."/>
            <person name="George R.A."/>
            <person name="Guarin H."/>
            <person name="Kronmiller B."/>
            <person name="Pacleb J.M."/>
            <person name="Park S."/>
            <person name="Wan K.H."/>
            <person name="Rubin G.M."/>
            <person name="Celniker S.E."/>
        </authorList>
    </citation>
    <scope>NUCLEOTIDE SEQUENCE [LARGE SCALE MRNA] (ISOFORM A)</scope>
    <source>
        <strain>Berkeley</strain>
        <tissue>Embryo</tissue>
    </source>
</reference>
<evidence type="ECO:0000250" key="1">
    <source>
        <dbReference type="UniProtKB" id="O46563"/>
    </source>
</evidence>
<evidence type="ECO:0000250" key="2">
    <source>
        <dbReference type="UniProtKB" id="P41807"/>
    </source>
</evidence>
<evidence type="ECO:0000250" key="3">
    <source>
        <dbReference type="UniProtKB" id="Q9UI12"/>
    </source>
</evidence>
<evidence type="ECO:0000303" key="4">
    <source ref="1"/>
</evidence>
<evidence type="ECO:0000305" key="5"/>
<gene>
    <name type="primary">VhaSFD</name>
    <name type="ORF">CG17332</name>
</gene>
<comment type="function">
    <text evidence="1 2 3">Subunit of the V1 complex of vacuolar(H+)-ATPase (V-ATPase), a multisubunit enzyme composed of a peripheral complex (V1) that hydrolyzes ATP and a membrane integral complex (V0) that translocates protons (By similarity). V-ATPase is responsible for acidifying and maintaining the pH of intracellular compartments and in some cell types, is targeted to the plasma membrane, where it is responsible for acidifying the extracellular environment (By similarity). Subunit H is essential for V-ATPase activity, but not for the assembly of the complex (By similarity).</text>
</comment>
<comment type="subunit">
    <text evidence="3">V-ATPase is a heteromultimeric enzyme made up of two complexes: the ATP-hydrolytic V1 complex and the proton translocation V0 complex (By similarity). The V1 complex consists of three catalytic AB heterodimers that form a heterohexamer, three peripheral stalks each consisting of EG heterodimers, one central rotor including subunits D and F, and the regulatory subunits C and H (By similarity). The proton translocation complex V0 consists of the proton transport subunit a, a ring of proteolipid subunits c9c'', rotary subunit d, subunits e and f, and the accessory subunits VhaAC45 and ATP6AP2 (By similarity).</text>
</comment>
<comment type="alternative products">
    <event type="alternative splicing"/>
    <isoform>
        <id>Q9V3J1-1</id>
        <name>A</name>
        <sequence type="displayed"/>
    </isoform>
    <isoform>
        <id>Q9V3J1-2</id>
        <name>B</name>
        <sequence type="described" ref="VSP_010332"/>
    </isoform>
    <isoform>
        <id>Q9V3J1-3</id>
        <name>D</name>
        <sequence type="described" ref="VSP_010333 VSP_010334"/>
    </isoform>
</comment>
<comment type="similarity">
    <text evidence="5">Belongs to the V-ATPase H subunit family.</text>
</comment>
<comment type="sequence caution" evidence="5">
    <conflict type="miscellaneous discrepancy">
        <sequence resource="EMBL-CDS" id="AAD47254"/>
    </conflict>
    <text>Intron retention.</text>
</comment>
<organism>
    <name type="scientific">Drosophila melanogaster</name>
    <name type="common">Fruit fly</name>
    <dbReference type="NCBI Taxonomy" id="7227"/>
    <lineage>
        <taxon>Eukaryota</taxon>
        <taxon>Metazoa</taxon>
        <taxon>Ecdysozoa</taxon>
        <taxon>Arthropoda</taxon>
        <taxon>Hexapoda</taxon>
        <taxon>Insecta</taxon>
        <taxon>Pterygota</taxon>
        <taxon>Neoptera</taxon>
        <taxon>Endopterygota</taxon>
        <taxon>Diptera</taxon>
        <taxon>Brachycera</taxon>
        <taxon>Muscomorpha</taxon>
        <taxon>Ephydroidea</taxon>
        <taxon>Drosophilidae</taxon>
        <taxon>Drosophila</taxon>
        <taxon>Sophophora</taxon>
    </lineage>
</organism>
<dbReference type="EMBL" id="AF159457">
    <property type="protein sequence ID" value="AAD47254.1"/>
    <property type="status" value="ALT_SEQ"/>
    <property type="molecule type" value="mRNA"/>
</dbReference>
<dbReference type="EMBL" id="AE014134">
    <property type="protein sequence ID" value="AAF53555.2"/>
    <property type="molecule type" value="Genomic_DNA"/>
</dbReference>
<dbReference type="EMBL" id="AE014134">
    <property type="protein sequence ID" value="AAF53556.3"/>
    <property type="molecule type" value="Genomic_DNA"/>
</dbReference>
<dbReference type="EMBL" id="AE014134">
    <property type="protein sequence ID" value="AAN10957.1"/>
    <property type="molecule type" value="Genomic_DNA"/>
</dbReference>
<dbReference type="EMBL" id="AY052122">
    <property type="protein sequence ID" value="AAK93546.1"/>
    <property type="molecule type" value="mRNA"/>
</dbReference>
<dbReference type="RefSeq" id="NP_001260510.1">
    <molecule id="Q9V3J1-1"/>
    <property type="nucleotide sequence ID" value="NM_001273581.1"/>
</dbReference>
<dbReference type="RefSeq" id="NP_523585.2">
    <molecule id="Q9V3J1-1"/>
    <property type="nucleotide sequence ID" value="NM_078861.3"/>
</dbReference>
<dbReference type="RefSeq" id="NP_723992.1">
    <molecule id="Q9V3J1-2"/>
    <property type="nucleotide sequence ID" value="NM_165177.2"/>
</dbReference>
<dbReference type="RefSeq" id="NP_723993.1">
    <molecule id="Q9V3J1-3"/>
    <property type="nucleotide sequence ID" value="NM_165178.2"/>
</dbReference>
<dbReference type="SMR" id="Q9V3J1"/>
<dbReference type="BioGRID" id="61004">
    <property type="interactions" value="14"/>
</dbReference>
<dbReference type="FunCoup" id="Q9V3J1">
    <property type="interactions" value="2582"/>
</dbReference>
<dbReference type="IntAct" id="Q9V3J1">
    <property type="interactions" value="34"/>
</dbReference>
<dbReference type="STRING" id="7227.FBpp0080495"/>
<dbReference type="EnsemblMetazoa" id="FBtr0080940">
    <molecule id="Q9V3J1-1"/>
    <property type="protein sequence ID" value="FBpp0080494"/>
    <property type="gene ID" value="FBgn0027779"/>
</dbReference>
<dbReference type="EnsemblMetazoa" id="FBtr0080941">
    <molecule id="Q9V3J1-2"/>
    <property type="protein sequence ID" value="FBpp0080495"/>
    <property type="gene ID" value="FBgn0027779"/>
</dbReference>
<dbReference type="EnsemblMetazoa" id="FBtr0080942">
    <molecule id="Q9V3J1-3"/>
    <property type="protein sequence ID" value="FBpp0080496"/>
    <property type="gene ID" value="FBgn0027779"/>
</dbReference>
<dbReference type="EnsemblMetazoa" id="FBtr0335143">
    <molecule id="Q9V3J1-1"/>
    <property type="protein sequence ID" value="FBpp0307142"/>
    <property type="gene ID" value="FBgn0027779"/>
</dbReference>
<dbReference type="GeneID" id="34997"/>
<dbReference type="KEGG" id="dme:Dmel_CG17332"/>
<dbReference type="AGR" id="FB:FBgn0027779"/>
<dbReference type="CTD" id="34997"/>
<dbReference type="FlyBase" id="FBgn0027779">
    <property type="gene designation" value="VhaSFD"/>
</dbReference>
<dbReference type="VEuPathDB" id="VectorBase:FBgn0027779"/>
<dbReference type="eggNOG" id="KOG2759">
    <property type="taxonomic scope" value="Eukaryota"/>
</dbReference>
<dbReference type="GeneTree" id="ENSGT00390000003289"/>
<dbReference type="HOGENOM" id="CLU_025709_2_0_1"/>
<dbReference type="InParanoid" id="Q9V3J1"/>
<dbReference type="OMA" id="HSGHLRW"/>
<dbReference type="OrthoDB" id="10263554at2759"/>
<dbReference type="PhylomeDB" id="Q9V3J1"/>
<dbReference type="Reactome" id="R-DME-1222556">
    <property type="pathway name" value="ROS and RNS production in phagocytes"/>
</dbReference>
<dbReference type="Reactome" id="R-DME-77387">
    <property type="pathway name" value="Insulin receptor recycling"/>
</dbReference>
<dbReference type="Reactome" id="R-DME-917977">
    <property type="pathway name" value="Transferrin endocytosis and recycling"/>
</dbReference>
<dbReference type="Reactome" id="R-DME-9639288">
    <property type="pathway name" value="Amino acids regulate mTORC1"/>
</dbReference>
<dbReference type="Reactome" id="R-DME-983712">
    <property type="pathway name" value="Ion channel transport"/>
</dbReference>
<dbReference type="SignaLink" id="Q9V3J1"/>
<dbReference type="BioGRID-ORCS" id="34997">
    <property type="hits" value="0 hits in 1 CRISPR screen"/>
</dbReference>
<dbReference type="GenomeRNAi" id="34997"/>
<dbReference type="PRO" id="PR:Q9V3J1"/>
<dbReference type="Proteomes" id="UP000000803">
    <property type="component" value="Chromosome 2L"/>
</dbReference>
<dbReference type="Bgee" id="FBgn0027779">
    <property type="expression patterns" value="Expressed in adult hindgut (Drosophila) and 265 other cell types or tissues"/>
</dbReference>
<dbReference type="ExpressionAtlas" id="Q9V3J1">
    <property type="expression patterns" value="baseline and differential"/>
</dbReference>
<dbReference type="GO" id="GO:0033181">
    <property type="term" value="C:plasma membrane proton-transporting V-type ATPase complex"/>
    <property type="evidence" value="ECO:0000315"/>
    <property type="project" value="FlyBase"/>
</dbReference>
<dbReference type="GO" id="GO:0000221">
    <property type="term" value="C:vacuolar proton-transporting V-type ATPase, V1 domain"/>
    <property type="evidence" value="ECO:0000250"/>
    <property type="project" value="FlyBase"/>
</dbReference>
<dbReference type="GO" id="GO:0046961">
    <property type="term" value="F:proton-transporting ATPase activity, rotational mechanism"/>
    <property type="evidence" value="ECO:0007669"/>
    <property type="project" value="InterPro"/>
</dbReference>
<dbReference type="GO" id="GO:0008340">
    <property type="term" value="P:determination of adult lifespan"/>
    <property type="evidence" value="ECO:0000315"/>
    <property type="project" value="FlyBase"/>
</dbReference>
<dbReference type="GO" id="GO:0007042">
    <property type="term" value="P:lysosomal lumen acidification"/>
    <property type="evidence" value="ECO:0000315"/>
    <property type="project" value="FlyBase"/>
</dbReference>
<dbReference type="GO" id="GO:1902600">
    <property type="term" value="P:proton transmembrane transport"/>
    <property type="evidence" value="ECO:0000305"/>
    <property type="project" value="FlyBase"/>
</dbReference>
<dbReference type="CDD" id="cd00256">
    <property type="entry name" value="VATPase_H"/>
    <property type="match status" value="1"/>
</dbReference>
<dbReference type="FunFam" id="1.25.10.10:FF:000067">
    <property type="entry name" value="V-type proton ATPase subunit H"/>
    <property type="match status" value="1"/>
</dbReference>
<dbReference type="FunFam" id="1.25.40.150:FF:000001">
    <property type="entry name" value="V-type proton ATPase subunit H"/>
    <property type="match status" value="1"/>
</dbReference>
<dbReference type="Gene3D" id="1.25.10.10">
    <property type="entry name" value="Leucine-rich Repeat Variant"/>
    <property type="match status" value="1"/>
</dbReference>
<dbReference type="Gene3D" id="1.25.40.150">
    <property type="entry name" value="V-type ATPase, subunit H, C-terminal domain"/>
    <property type="match status" value="1"/>
</dbReference>
<dbReference type="InterPro" id="IPR011989">
    <property type="entry name" value="ARM-like"/>
</dbReference>
<dbReference type="InterPro" id="IPR016024">
    <property type="entry name" value="ARM-type_fold"/>
</dbReference>
<dbReference type="InterPro" id="IPR004908">
    <property type="entry name" value="ATPase_V1-cplx_hsu"/>
</dbReference>
<dbReference type="InterPro" id="IPR011987">
    <property type="entry name" value="ATPase_V1-cplx_hsu_C"/>
</dbReference>
<dbReference type="InterPro" id="IPR038497">
    <property type="entry name" value="ATPase_V1-cplx_hsu_C_sf"/>
</dbReference>
<dbReference type="PANTHER" id="PTHR10698">
    <property type="entry name" value="V-TYPE PROTON ATPASE SUBUNIT H"/>
    <property type="match status" value="1"/>
</dbReference>
<dbReference type="PANTHER" id="PTHR10698:SF0">
    <property type="entry name" value="V-TYPE PROTON ATPASE SUBUNIT H"/>
    <property type="match status" value="1"/>
</dbReference>
<dbReference type="Pfam" id="PF11698">
    <property type="entry name" value="V-ATPase_H_C"/>
    <property type="match status" value="1"/>
</dbReference>
<dbReference type="Pfam" id="PF03224">
    <property type="entry name" value="V-ATPase_H_N"/>
    <property type="match status" value="1"/>
</dbReference>
<dbReference type="PIRSF" id="PIRSF032184">
    <property type="entry name" value="ATPase_V1_H"/>
    <property type="match status" value="1"/>
</dbReference>
<dbReference type="SUPFAM" id="SSF48371">
    <property type="entry name" value="ARM repeat"/>
    <property type="match status" value="1"/>
</dbReference>
<proteinExistence type="evidence at transcript level"/>
<name>VATH_DROME</name>
<feature type="chain" id="PRO_0000124196" description="V-type proton ATPase subunit H">
    <location>
        <begin position="1"/>
        <end position="468"/>
    </location>
</feature>
<feature type="splice variant" id="VSP_010332" description="In isoform B." evidence="5">
    <original>N</original>
    <variation>NGLAYLQEMAQLAKRTQTILVHTHGKDKDHHGHQYSPTLAQLQQQHELAERANESYREVGVGSDHQQQDGKCVIP</variation>
    <location>
        <position position="172"/>
    </location>
</feature>
<feature type="splice variant" id="VSP_010333" description="In isoform D." evidence="4">
    <original>H</original>
    <variation>Q</variation>
    <location>
        <position position="441"/>
    </location>
</feature>
<feature type="splice variant" id="VSP_010334" description="In isoform D." evidence="4">
    <location>
        <begin position="442"/>
        <end position="468"/>
    </location>
</feature>
<feature type="sequence conflict" description="In Ref. 1; AAD47254." evidence="5" ref="1">
    <location>
        <begin position="404"/>
        <end position="440"/>
    </location>
</feature>
<accession>Q9V3J1</accession>
<accession>Q8IP12</accession>
<accession>Q960C9</accession>
<accession>Q9VJJ2</accession>
<protein>
    <recommendedName>
        <fullName>V-type proton ATPase subunit H</fullName>
        <shortName>V-ATPase subunit H</shortName>
    </recommendedName>
    <alternativeName>
        <fullName>Vacuolar proton pump subunit H</fullName>
    </alternativeName>
    <alternativeName>
        <fullName>Vacuolar proton pump subunit SFD</fullName>
    </alternativeName>
</protein>